<reference key="1">
    <citation type="submission" date="2008-06" db="EMBL/GenBank/DDBJ databases">
        <title>Complete sequence of chromosome of Prosthecochloris aestuarii DSM 271.</title>
        <authorList>
            <consortium name="US DOE Joint Genome Institute"/>
            <person name="Lucas S."/>
            <person name="Copeland A."/>
            <person name="Lapidus A."/>
            <person name="Glavina del Rio T."/>
            <person name="Dalin E."/>
            <person name="Tice H."/>
            <person name="Bruce D."/>
            <person name="Goodwin L."/>
            <person name="Pitluck S."/>
            <person name="Schmutz J."/>
            <person name="Larimer F."/>
            <person name="Land M."/>
            <person name="Hauser L."/>
            <person name="Kyrpides N."/>
            <person name="Anderson I."/>
            <person name="Liu Z."/>
            <person name="Li T."/>
            <person name="Zhao F."/>
            <person name="Overmann J."/>
            <person name="Bryant D.A."/>
            <person name="Richardson P."/>
        </authorList>
    </citation>
    <scope>NUCLEOTIDE SEQUENCE [LARGE SCALE GENOMIC DNA]</scope>
    <source>
        <strain>DSM 271 / SK 413</strain>
    </source>
</reference>
<accession>B4S616</accession>
<comment type="function">
    <text evidence="1">Catalyzes the interconversion of 2-phosphoglycerate and 3-phosphoglycerate.</text>
</comment>
<comment type="catalytic activity">
    <reaction evidence="1">
        <text>(2R)-2-phosphoglycerate = (2R)-3-phosphoglycerate</text>
        <dbReference type="Rhea" id="RHEA:15901"/>
        <dbReference type="ChEBI" id="CHEBI:58272"/>
        <dbReference type="ChEBI" id="CHEBI:58289"/>
        <dbReference type="EC" id="5.4.2.11"/>
    </reaction>
</comment>
<comment type="pathway">
    <text evidence="1">Carbohydrate degradation; glycolysis; pyruvate from D-glyceraldehyde 3-phosphate: step 3/5.</text>
</comment>
<comment type="similarity">
    <text evidence="1">Belongs to the phosphoglycerate mutase family. BPG-dependent PGAM subfamily.</text>
</comment>
<evidence type="ECO:0000255" key="1">
    <source>
        <dbReference type="HAMAP-Rule" id="MF_01039"/>
    </source>
</evidence>
<proteinExistence type="inferred from homology"/>
<dbReference type="EC" id="5.4.2.11" evidence="1"/>
<dbReference type="EMBL" id="CP001108">
    <property type="protein sequence ID" value="ACF45667.1"/>
    <property type="molecule type" value="Genomic_DNA"/>
</dbReference>
<dbReference type="RefSeq" id="WP_012505204.1">
    <property type="nucleotide sequence ID" value="NC_011059.1"/>
</dbReference>
<dbReference type="SMR" id="B4S616"/>
<dbReference type="STRING" id="290512.Paes_0611"/>
<dbReference type="KEGG" id="paa:Paes_0611"/>
<dbReference type="eggNOG" id="COG0588">
    <property type="taxonomic scope" value="Bacteria"/>
</dbReference>
<dbReference type="HOGENOM" id="CLU_033323_1_1_10"/>
<dbReference type="UniPathway" id="UPA00109">
    <property type="reaction ID" value="UER00186"/>
</dbReference>
<dbReference type="Proteomes" id="UP000002725">
    <property type="component" value="Chromosome"/>
</dbReference>
<dbReference type="GO" id="GO:0004619">
    <property type="term" value="F:phosphoglycerate mutase activity"/>
    <property type="evidence" value="ECO:0007669"/>
    <property type="project" value="UniProtKB-EC"/>
</dbReference>
<dbReference type="GO" id="GO:0006094">
    <property type="term" value="P:gluconeogenesis"/>
    <property type="evidence" value="ECO:0007669"/>
    <property type="project" value="UniProtKB-UniRule"/>
</dbReference>
<dbReference type="GO" id="GO:0006096">
    <property type="term" value="P:glycolytic process"/>
    <property type="evidence" value="ECO:0007669"/>
    <property type="project" value="UniProtKB-UniRule"/>
</dbReference>
<dbReference type="CDD" id="cd07067">
    <property type="entry name" value="HP_PGM_like"/>
    <property type="match status" value="1"/>
</dbReference>
<dbReference type="FunFam" id="3.40.50.1240:FF:000003">
    <property type="entry name" value="2,3-bisphosphoglycerate-dependent phosphoglycerate mutase"/>
    <property type="match status" value="1"/>
</dbReference>
<dbReference type="Gene3D" id="3.40.50.1240">
    <property type="entry name" value="Phosphoglycerate mutase-like"/>
    <property type="match status" value="1"/>
</dbReference>
<dbReference type="HAMAP" id="MF_01039">
    <property type="entry name" value="PGAM_GpmA"/>
    <property type="match status" value="1"/>
</dbReference>
<dbReference type="InterPro" id="IPR013078">
    <property type="entry name" value="His_Pase_superF_clade-1"/>
</dbReference>
<dbReference type="InterPro" id="IPR029033">
    <property type="entry name" value="His_PPase_superfam"/>
</dbReference>
<dbReference type="InterPro" id="IPR001345">
    <property type="entry name" value="PG/BPGM_mutase_AS"/>
</dbReference>
<dbReference type="InterPro" id="IPR005952">
    <property type="entry name" value="Phosphogly_mut1"/>
</dbReference>
<dbReference type="NCBIfam" id="TIGR01258">
    <property type="entry name" value="pgm_1"/>
    <property type="match status" value="1"/>
</dbReference>
<dbReference type="NCBIfam" id="NF010713">
    <property type="entry name" value="PRK14115.1"/>
    <property type="match status" value="1"/>
</dbReference>
<dbReference type="NCBIfam" id="NF010718">
    <property type="entry name" value="PRK14120.1"/>
    <property type="match status" value="1"/>
</dbReference>
<dbReference type="PANTHER" id="PTHR11931">
    <property type="entry name" value="PHOSPHOGLYCERATE MUTASE"/>
    <property type="match status" value="1"/>
</dbReference>
<dbReference type="Pfam" id="PF00300">
    <property type="entry name" value="His_Phos_1"/>
    <property type="match status" value="2"/>
</dbReference>
<dbReference type="PIRSF" id="PIRSF000709">
    <property type="entry name" value="6PFK_2-Ptase"/>
    <property type="match status" value="1"/>
</dbReference>
<dbReference type="SMART" id="SM00855">
    <property type="entry name" value="PGAM"/>
    <property type="match status" value="1"/>
</dbReference>
<dbReference type="SUPFAM" id="SSF53254">
    <property type="entry name" value="Phosphoglycerate mutase-like"/>
    <property type="match status" value="1"/>
</dbReference>
<dbReference type="PROSITE" id="PS00175">
    <property type="entry name" value="PG_MUTASE"/>
    <property type="match status" value="1"/>
</dbReference>
<name>GPMA_PROA2</name>
<keyword id="KW-0312">Gluconeogenesis</keyword>
<keyword id="KW-0324">Glycolysis</keyword>
<keyword id="KW-0413">Isomerase</keyword>
<feature type="chain" id="PRO_1000135965" description="2,3-bisphosphoglycerate-dependent phosphoglycerate mutase">
    <location>
        <begin position="1"/>
        <end position="247"/>
    </location>
</feature>
<feature type="active site" description="Tele-phosphohistidine intermediate" evidence="1">
    <location>
        <position position="9"/>
    </location>
</feature>
<feature type="active site" description="Proton donor/acceptor" evidence="1">
    <location>
        <position position="87"/>
    </location>
</feature>
<feature type="binding site" evidence="1">
    <location>
        <begin position="8"/>
        <end position="15"/>
    </location>
    <ligand>
        <name>substrate</name>
    </ligand>
</feature>
<feature type="binding site" evidence="1">
    <location>
        <begin position="21"/>
        <end position="22"/>
    </location>
    <ligand>
        <name>substrate</name>
    </ligand>
</feature>
<feature type="binding site" evidence="1">
    <location>
        <position position="60"/>
    </location>
    <ligand>
        <name>substrate</name>
    </ligand>
</feature>
<feature type="binding site" evidence="1">
    <location>
        <begin position="87"/>
        <end position="90"/>
    </location>
    <ligand>
        <name>substrate</name>
    </ligand>
</feature>
<feature type="binding site" evidence="1">
    <location>
        <position position="98"/>
    </location>
    <ligand>
        <name>substrate</name>
    </ligand>
</feature>
<feature type="binding site" evidence="1">
    <location>
        <begin position="114"/>
        <end position="115"/>
    </location>
    <ligand>
        <name>substrate</name>
    </ligand>
</feature>
<feature type="binding site" evidence="1">
    <location>
        <begin position="183"/>
        <end position="184"/>
    </location>
    <ligand>
        <name>substrate</name>
    </ligand>
</feature>
<feature type="site" description="Transition state stabilizer" evidence="1">
    <location>
        <position position="182"/>
    </location>
</feature>
<organism>
    <name type="scientific">Prosthecochloris aestuarii (strain DSM 271 / SK 413)</name>
    <dbReference type="NCBI Taxonomy" id="290512"/>
    <lineage>
        <taxon>Bacteria</taxon>
        <taxon>Pseudomonadati</taxon>
        <taxon>Chlorobiota</taxon>
        <taxon>Chlorobiia</taxon>
        <taxon>Chlorobiales</taxon>
        <taxon>Chlorobiaceae</taxon>
        <taxon>Prosthecochloris</taxon>
    </lineage>
</organism>
<gene>
    <name evidence="1" type="primary">gpmA</name>
    <name type="ordered locus">Paes_0611</name>
</gene>
<sequence length="247" mass="27932">MIKLVLLRHGESQWNRENRFTGWRDIDLSEKGLAEAANAGVLMKEEGLTFDIAYTSVLKRAIRTLWNALDTMDLLWVPVEKTWRLNERHYGSLQGLNKTETAQLHGEEQVLVWRRSYDTPPPPLEKTDERYPGNDPRYASLSSEEIPVAECLKDTVARFLPYWHETIAPQIKAGKKVLIVAHGNSLRALVKYLDNISEEDIVGINIPTGIPLVYELDDDLKPIRHYYLGDQEAAAKAAAAVANQAKG</sequence>
<protein>
    <recommendedName>
        <fullName evidence="1">2,3-bisphosphoglycerate-dependent phosphoglycerate mutase</fullName>
        <shortName evidence="1">BPG-dependent PGAM</shortName>
        <shortName evidence="1">PGAM</shortName>
        <shortName evidence="1">Phosphoglyceromutase</shortName>
        <shortName evidence="1">dPGM</shortName>
        <ecNumber evidence="1">5.4.2.11</ecNumber>
    </recommendedName>
</protein>